<feature type="transit peptide" description="Mitochondrion" evidence="2">
    <location>
        <begin position="1"/>
        <end position="26"/>
    </location>
</feature>
<feature type="chain" id="PRO_0000405510" description="Mitochondrial zinc maintenance protein 1, mitochondrial">
    <location>
        <begin position="27"/>
        <end position="121"/>
    </location>
</feature>
<comment type="function">
    <text evidence="1">Assembly factor required for Rieske Fe-S protein RIP1 incorporation into the cytochrome b-c1 (CIII) complex. Functions as a chaperone, binding to this subunit within the mitochondrial matrix and stabilizing it prior to its translocation and insertion into the late CIII dimeric intermediate within the mitochondrial inner membrane. Modulates the mitochondrial matrix zinc pool (By similarity).</text>
</comment>
<comment type="subunit">
    <text evidence="1">Interacts with RIP1.</text>
</comment>
<comment type="subcellular location">
    <subcellularLocation>
        <location evidence="1">Mitochondrion matrix</location>
    </subcellularLocation>
</comment>
<comment type="similarity">
    <text evidence="3">Belongs to the complex I LYR family. MZM1 subfamily.</text>
</comment>
<name>MZM1_PICST</name>
<dbReference type="EMBL" id="CP000496">
    <property type="protein sequence ID" value="ABN64330.1"/>
    <property type="molecule type" value="Genomic_DNA"/>
</dbReference>
<dbReference type="RefSeq" id="XP_001382359.1">
    <property type="nucleotide sequence ID" value="XM_001382322.1"/>
</dbReference>
<dbReference type="SMR" id="A3LNG8"/>
<dbReference type="FunCoup" id="A3LNG8">
    <property type="interactions" value="24"/>
</dbReference>
<dbReference type="STRING" id="322104.A3LNG8"/>
<dbReference type="GeneID" id="4837544"/>
<dbReference type="KEGG" id="pic:PICST_76234"/>
<dbReference type="eggNOG" id="ENOG502S6EF">
    <property type="taxonomic scope" value="Eukaryota"/>
</dbReference>
<dbReference type="HOGENOM" id="CLU_147114_2_2_1"/>
<dbReference type="InParanoid" id="A3LNG8"/>
<dbReference type="OMA" id="KYKLRIH"/>
<dbReference type="OrthoDB" id="529194at2759"/>
<dbReference type="Proteomes" id="UP000002258">
    <property type="component" value="Chromosome 2"/>
</dbReference>
<dbReference type="GO" id="GO:0005759">
    <property type="term" value="C:mitochondrial matrix"/>
    <property type="evidence" value="ECO:0007669"/>
    <property type="project" value="UniProtKB-SubCell"/>
</dbReference>
<dbReference type="GO" id="GO:0044183">
    <property type="term" value="F:protein folding chaperone"/>
    <property type="evidence" value="ECO:0007669"/>
    <property type="project" value="TreeGrafter"/>
</dbReference>
<dbReference type="GO" id="GO:0034551">
    <property type="term" value="P:mitochondrial respiratory chain complex III assembly"/>
    <property type="evidence" value="ECO:0007669"/>
    <property type="project" value="InterPro"/>
</dbReference>
<dbReference type="CDD" id="cd20267">
    <property type="entry name" value="Complex1_LYR_LYRM7"/>
    <property type="match status" value="1"/>
</dbReference>
<dbReference type="InterPro" id="IPR008011">
    <property type="entry name" value="Complex1_LYR_dom"/>
</dbReference>
<dbReference type="InterPro" id="IPR045298">
    <property type="entry name" value="Complex1_LYR_LYRM7"/>
</dbReference>
<dbReference type="InterPro" id="IPR050435">
    <property type="entry name" value="MZM1/LYRM7"/>
</dbReference>
<dbReference type="PANTHER" id="PTHR46749">
    <property type="entry name" value="COMPLEX III ASSEMBLY FACTOR LYRM7"/>
    <property type="match status" value="1"/>
</dbReference>
<dbReference type="PANTHER" id="PTHR46749:SF1">
    <property type="entry name" value="COMPLEX III ASSEMBLY FACTOR LYRM7"/>
    <property type="match status" value="1"/>
</dbReference>
<dbReference type="Pfam" id="PF05347">
    <property type="entry name" value="Complex1_LYR"/>
    <property type="match status" value="1"/>
</dbReference>
<gene>
    <name type="primary">MZM1</name>
    <name type="ORF">PICST_76234</name>
</gene>
<keyword id="KW-0143">Chaperone</keyword>
<keyword id="KW-0496">Mitochondrion</keyword>
<keyword id="KW-1185">Reference proteome</keyword>
<keyword id="KW-0809">Transit peptide</keyword>
<reference key="1">
    <citation type="journal article" date="2007" name="Nat. Biotechnol.">
        <title>Genome sequence of the lignocellulose-bioconverting and xylose-fermenting yeast Pichia stipitis.</title>
        <authorList>
            <person name="Jeffries T.W."/>
            <person name="Grigoriev I.V."/>
            <person name="Grimwood J."/>
            <person name="Laplaza J.M."/>
            <person name="Aerts A."/>
            <person name="Salamov A."/>
            <person name="Schmutz J."/>
            <person name="Lindquist E."/>
            <person name="Dehal P."/>
            <person name="Shapiro H."/>
            <person name="Jin Y.-S."/>
            <person name="Passoth V."/>
            <person name="Richardson P.M."/>
        </authorList>
    </citation>
    <scope>NUCLEOTIDE SEQUENCE [LARGE SCALE GENOMIC DNA]</scope>
    <source>
        <strain>ATCC 58785 / CBS 6054 / NBRC 10063 / NRRL Y-11545</strain>
    </source>
</reference>
<evidence type="ECO:0000250" key="1"/>
<evidence type="ECO:0000255" key="2"/>
<evidence type="ECO:0000305" key="3"/>
<accession>A3LNG8</accession>
<organism>
    <name type="scientific">Scheffersomyces stipitis (strain ATCC 58785 / CBS 6054 / NBRC 10063 / NRRL Y-11545)</name>
    <name type="common">Yeast</name>
    <name type="synonym">Pichia stipitis</name>
    <dbReference type="NCBI Taxonomy" id="322104"/>
    <lineage>
        <taxon>Eukaryota</taxon>
        <taxon>Fungi</taxon>
        <taxon>Dikarya</taxon>
        <taxon>Ascomycota</taxon>
        <taxon>Saccharomycotina</taxon>
        <taxon>Pichiomycetes</taxon>
        <taxon>Debaryomycetaceae</taxon>
        <taxon>Scheffersomyces</taxon>
    </lineage>
</organism>
<protein>
    <recommendedName>
        <fullName>Mitochondrial zinc maintenance protein 1, mitochondrial</fullName>
    </recommendedName>
</protein>
<proteinExistence type="inferred from homology"/>
<sequence length="121" mass="13432">MSISNVSAAKSAYRNALRATRIAFRQDVPVLSSARLQIKDGFTKNRELKDEAEISEAISKLNEVSKFLVQNIVQGEKQEDGKYFLNFHEKTELGDNETIRQGNKANLGSLAGAKVKKCSDN</sequence>